<comment type="function">
    <text evidence="1">Component of the large ribosomal subunit. The ribosome is a large ribonucleoprotein complex responsible for the synthesis of proteins in the cell.</text>
</comment>
<comment type="subunit">
    <text evidence="1">Component of the large ribosomal subunit.</text>
</comment>
<comment type="subcellular location">
    <subcellularLocation>
        <location evidence="1">Cytoplasm</location>
    </subcellularLocation>
</comment>
<comment type="PTM">
    <text evidence="1">Mono-ADP-ribosylation at Glu-4 by PARP16 inhibits polysome assembly and mRNA loading, thereby inhibiting protein translation.</text>
</comment>
<comment type="similarity">
    <text evidence="4">Belongs to the eukaryotic ribosomal protein eL24 family.</text>
</comment>
<gene>
    <name type="primary">Rpl24</name>
</gene>
<feature type="chain" id="PRO_0000136870" description="Large ribosomal subunit protein eL24">
    <location>
        <begin position="1"/>
        <end position="157"/>
    </location>
</feature>
<feature type="region of interest" description="Disordered" evidence="3">
    <location>
        <begin position="106"/>
        <end position="157"/>
    </location>
</feature>
<feature type="compositionally biased region" description="Basic and acidic residues" evidence="3">
    <location>
        <begin position="106"/>
        <end position="117"/>
    </location>
</feature>
<feature type="compositionally biased region" description="Low complexity" evidence="3">
    <location>
        <begin position="123"/>
        <end position="140"/>
    </location>
</feature>
<feature type="modified residue" description="ADP-ribosyl glutamic acid" evidence="1">
    <location>
        <position position="4"/>
    </location>
</feature>
<feature type="modified residue" description="N6-acetyllysine; alternate" evidence="1">
    <location>
        <position position="27"/>
    </location>
</feature>
<feature type="modified residue" description="N6-acetyllysine" evidence="1">
    <location>
        <position position="77"/>
    </location>
</feature>
<feature type="modified residue" description="Phosphothreonine" evidence="1">
    <location>
        <position position="83"/>
    </location>
</feature>
<feature type="modified residue" description="Phosphoserine" evidence="1">
    <location>
        <position position="86"/>
    </location>
</feature>
<feature type="modified residue" description="N6-acetyllysine" evidence="1">
    <location>
        <position position="93"/>
    </location>
</feature>
<feature type="modified residue" description="N6-succinyllysine" evidence="2">
    <location>
        <position position="131"/>
    </location>
</feature>
<feature type="modified residue" description="Phosphoserine" evidence="1">
    <location>
        <position position="149"/>
    </location>
</feature>
<feature type="cross-link" description="Glycyl lysine isopeptide (Lys-Gly) (interchain with G-Cter in SUMO2)" evidence="1">
    <location>
        <position position="2"/>
    </location>
</feature>
<feature type="cross-link" description="Glycyl lysine isopeptide (Lys-Gly) (interchain with G-Cter in SUMO2); alternate" evidence="1">
    <location>
        <position position="27"/>
    </location>
</feature>
<feature type="cross-link" description="Glycyl lysine isopeptide (Lys-Gly) (interchain with G-Cter in SUMO2)" evidence="1">
    <location>
        <position position="35"/>
    </location>
</feature>
<feature type="cross-link" description="Glycyl lysine isopeptide (Lys-Gly) (interchain with G-Cter in SUMO2)" evidence="1">
    <location>
        <position position="147"/>
    </location>
</feature>
<dbReference type="EMBL" id="X78443">
    <property type="protein sequence ID" value="CAA55203.1"/>
    <property type="molecule type" value="mRNA"/>
</dbReference>
<dbReference type="EMBL" id="BC058473">
    <property type="protein sequence ID" value="AAH58473.1"/>
    <property type="molecule type" value="mRNA"/>
</dbReference>
<dbReference type="PIR" id="JC2444">
    <property type="entry name" value="JC2444"/>
</dbReference>
<dbReference type="RefSeq" id="NP_071960.1">
    <property type="nucleotide sequence ID" value="NM_022515.2"/>
</dbReference>
<dbReference type="SMR" id="P83732"/>
<dbReference type="BioGRID" id="249022">
    <property type="interactions" value="7"/>
</dbReference>
<dbReference type="FunCoup" id="P83732">
    <property type="interactions" value="2987"/>
</dbReference>
<dbReference type="IntAct" id="P83732">
    <property type="interactions" value="10"/>
</dbReference>
<dbReference type="STRING" id="10116.ENSRNOP00000002194"/>
<dbReference type="iPTMnet" id="P83732"/>
<dbReference type="PhosphoSitePlus" id="P83732"/>
<dbReference type="jPOST" id="P83732"/>
<dbReference type="PaxDb" id="10116-ENSRNOP00000002194"/>
<dbReference type="Ensembl" id="ENSRNOT00000002194.8">
    <property type="protein sequence ID" value="ENSRNOP00000002194.7"/>
    <property type="gene ID" value="ENSRNOG00000001611.8"/>
</dbReference>
<dbReference type="GeneID" id="64307"/>
<dbReference type="KEGG" id="rno:64307"/>
<dbReference type="UCSC" id="RGD:621191">
    <property type="organism name" value="rat"/>
</dbReference>
<dbReference type="AGR" id="RGD:621191"/>
<dbReference type="CTD" id="6152"/>
<dbReference type="RGD" id="621191">
    <property type="gene designation" value="Rpl24"/>
</dbReference>
<dbReference type="eggNOG" id="KOG1722">
    <property type="taxonomic scope" value="Eukaryota"/>
</dbReference>
<dbReference type="GeneTree" id="ENSGT00950000183105"/>
<dbReference type="HOGENOM" id="CLU_106411_1_0_1"/>
<dbReference type="InParanoid" id="P83732"/>
<dbReference type="OMA" id="PGHGKKM"/>
<dbReference type="OrthoDB" id="1727108at2759"/>
<dbReference type="PhylomeDB" id="P83732"/>
<dbReference type="TreeFam" id="TF312933"/>
<dbReference type="Reactome" id="R-RNO-156827">
    <property type="pathway name" value="L13a-mediated translational silencing of Ceruloplasmin expression"/>
</dbReference>
<dbReference type="Reactome" id="R-RNO-1799339">
    <property type="pathway name" value="SRP-dependent cotranslational protein targeting to membrane"/>
</dbReference>
<dbReference type="Reactome" id="R-RNO-6791226">
    <property type="pathway name" value="Major pathway of rRNA processing in the nucleolus and cytosol"/>
</dbReference>
<dbReference type="Reactome" id="R-RNO-72689">
    <property type="pathway name" value="Formation of a pool of free 40S subunits"/>
</dbReference>
<dbReference type="Reactome" id="R-RNO-72706">
    <property type="pathway name" value="GTP hydrolysis and joining of the 60S ribosomal subunit"/>
</dbReference>
<dbReference type="Reactome" id="R-RNO-975956">
    <property type="pathway name" value="Nonsense Mediated Decay (NMD) independent of the Exon Junction Complex (EJC)"/>
</dbReference>
<dbReference type="Reactome" id="R-RNO-975957">
    <property type="pathway name" value="Nonsense Mediated Decay (NMD) enhanced by the Exon Junction Complex (EJC)"/>
</dbReference>
<dbReference type="PRO" id="PR:P83732"/>
<dbReference type="Proteomes" id="UP000002494">
    <property type="component" value="Chromosome 11"/>
</dbReference>
<dbReference type="GO" id="GO:0005737">
    <property type="term" value="C:cytoplasm"/>
    <property type="evidence" value="ECO:0000266"/>
    <property type="project" value="RGD"/>
</dbReference>
<dbReference type="GO" id="GO:0022625">
    <property type="term" value="C:cytosolic large ribosomal subunit"/>
    <property type="evidence" value="ECO:0000314"/>
    <property type="project" value="MGI"/>
</dbReference>
<dbReference type="GO" id="GO:0022626">
    <property type="term" value="C:cytosolic ribosome"/>
    <property type="evidence" value="ECO:0000314"/>
    <property type="project" value="RGD"/>
</dbReference>
<dbReference type="GO" id="GO:0045202">
    <property type="term" value="C:synapse"/>
    <property type="evidence" value="ECO:0000266"/>
    <property type="project" value="RGD"/>
</dbReference>
<dbReference type="GO" id="GO:0003729">
    <property type="term" value="F:mRNA binding"/>
    <property type="evidence" value="ECO:0000318"/>
    <property type="project" value="GO_Central"/>
</dbReference>
<dbReference type="GO" id="GO:0003735">
    <property type="term" value="F:structural constituent of ribosome"/>
    <property type="evidence" value="ECO:0000314"/>
    <property type="project" value="MGI"/>
</dbReference>
<dbReference type="GO" id="GO:0002181">
    <property type="term" value="P:cytoplasmic translation"/>
    <property type="evidence" value="ECO:0000250"/>
    <property type="project" value="UniProtKB"/>
</dbReference>
<dbReference type="GO" id="GO:0010458">
    <property type="term" value="P:exit from mitosis"/>
    <property type="evidence" value="ECO:0000266"/>
    <property type="project" value="RGD"/>
</dbReference>
<dbReference type="GO" id="GO:0021554">
    <property type="term" value="P:optic nerve development"/>
    <property type="evidence" value="ECO:0000266"/>
    <property type="project" value="RGD"/>
</dbReference>
<dbReference type="GO" id="GO:0060041">
    <property type="term" value="P:retina development in camera-type eye"/>
    <property type="evidence" value="ECO:0000266"/>
    <property type="project" value="RGD"/>
</dbReference>
<dbReference type="GO" id="GO:0031290">
    <property type="term" value="P:retinal ganglion cell axon guidance"/>
    <property type="evidence" value="ECO:0000266"/>
    <property type="project" value="RGD"/>
</dbReference>
<dbReference type="GO" id="GO:0000027">
    <property type="term" value="P:ribosomal large subunit assembly"/>
    <property type="evidence" value="ECO:0000266"/>
    <property type="project" value="RGD"/>
</dbReference>
<dbReference type="GO" id="GO:0006412">
    <property type="term" value="P:translation"/>
    <property type="evidence" value="ECO:0000266"/>
    <property type="project" value="RGD"/>
</dbReference>
<dbReference type="CDD" id="cd00472">
    <property type="entry name" value="Ribosomal_L24e_L24"/>
    <property type="match status" value="1"/>
</dbReference>
<dbReference type="FunFam" id="2.30.170.20:FF:000004">
    <property type="entry name" value="60S ribosomal protein l24"/>
    <property type="match status" value="1"/>
</dbReference>
<dbReference type="Gene3D" id="6.10.250.1270">
    <property type="match status" value="1"/>
</dbReference>
<dbReference type="Gene3D" id="2.30.170.20">
    <property type="entry name" value="Ribosomal protein L24e"/>
    <property type="match status" value="1"/>
</dbReference>
<dbReference type="InterPro" id="IPR038630">
    <property type="entry name" value="L24e/L24_sf"/>
</dbReference>
<dbReference type="InterPro" id="IPR056366">
    <property type="entry name" value="Ribosomal_eL24"/>
</dbReference>
<dbReference type="InterPro" id="IPR000988">
    <property type="entry name" value="Ribosomal_eL24-rel_N"/>
</dbReference>
<dbReference type="InterPro" id="IPR023442">
    <property type="entry name" value="Ribosomal_eL24_CS"/>
</dbReference>
<dbReference type="InterPro" id="IPR011017">
    <property type="entry name" value="TRASH_dom"/>
</dbReference>
<dbReference type="PANTHER" id="PTHR10792">
    <property type="entry name" value="60S RIBOSOMAL PROTEIN L24"/>
    <property type="match status" value="1"/>
</dbReference>
<dbReference type="PANTHER" id="PTHR10792:SF1">
    <property type="entry name" value="RIBOSOMAL PROTEIN L24"/>
    <property type="match status" value="1"/>
</dbReference>
<dbReference type="Pfam" id="PF01246">
    <property type="entry name" value="Ribosomal_L24e"/>
    <property type="match status" value="1"/>
</dbReference>
<dbReference type="SMART" id="SM00746">
    <property type="entry name" value="TRASH"/>
    <property type="match status" value="1"/>
</dbReference>
<dbReference type="SUPFAM" id="SSF57716">
    <property type="entry name" value="Glucocorticoid receptor-like (DNA-binding domain)"/>
    <property type="match status" value="1"/>
</dbReference>
<dbReference type="PROSITE" id="PS01073">
    <property type="entry name" value="RIBOSOMAL_L24E"/>
    <property type="match status" value="1"/>
</dbReference>
<sequence>MKVELCSFSGYKIYPGHGRRYARTDGKVFQFLNAKCESAFLSKRNPRQINWTVLYRRKHKKGQSEEIQKKRTRRAVKFQRAITGASLADIMAKRNQKPEVRKAQREQAIRAAKEAKKAKQASKKTAMAAAKAPTKAAPKQKIVKPVKVSAPRVGGKR</sequence>
<keyword id="KW-0007">Acetylation</keyword>
<keyword id="KW-0013">ADP-ribosylation</keyword>
<keyword id="KW-0963">Cytoplasm</keyword>
<keyword id="KW-1017">Isopeptide bond</keyword>
<keyword id="KW-0597">Phosphoprotein</keyword>
<keyword id="KW-1185">Reference proteome</keyword>
<keyword id="KW-0687">Ribonucleoprotein</keyword>
<keyword id="KW-0689">Ribosomal protein</keyword>
<keyword id="KW-0832">Ubl conjugation</keyword>
<reference key="1">
    <citation type="journal article" date="1994" name="Biochem. Biophys. Res. Commun.">
        <title>The primary structure of rat ribosomal protein L24.</title>
        <authorList>
            <person name="Chan Y.-L."/>
            <person name="Olvera J."/>
            <person name="Wool I.G."/>
        </authorList>
    </citation>
    <scope>NUCLEOTIDE SEQUENCE [MRNA]</scope>
    <source>
        <strain>Sprague-Dawley</strain>
        <tissue>Liver</tissue>
    </source>
</reference>
<reference key="2">
    <citation type="journal article" date="2004" name="Genome Res.">
        <title>The status, quality, and expansion of the NIH full-length cDNA project: the Mammalian Gene Collection (MGC).</title>
        <authorList>
            <consortium name="The MGC Project Team"/>
        </authorList>
    </citation>
    <scope>NUCLEOTIDE SEQUENCE [LARGE SCALE MRNA]</scope>
    <source>
        <tissue>Pituitary</tissue>
    </source>
</reference>
<protein>
    <recommendedName>
        <fullName evidence="4">Large ribosomal subunit protein eL24</fullName>
    </recommendedName>
    <alternativeName>
        <fullName>60S ribosomal protein L24</fullName>
    </alternativeName>
    <alternativeName>
        <fullName>L30</fullName>
    </alternativeName>
</protein>
<organism>
    <name type="scientific">Rattus norvegicus</name>
    <name type="common">Rat</name>
    <dbReference type="NCBI Taxonomy" id="10116"/>
    <lineage>
        <taxon>Eukaryota</taxon>
        <taxon>Metazoa</taxon>
        <taxon>Chordata</taxon>
        <taxon>Craniata</taxon>
        <taxon>Vertebrata</taxon>
        <taxon>Euteleostomi</taxon>
        <taxon>Mammalia</taxon>
        <taxon>Eutheria</taxon>
        <taxon>Euarchontoglires</taxon>
        <taxon>Glires</taxon>
        <taxon>Rodentia</taxon>
        <taxon>Myomorpha</taxon>
        <taxon>Muroidea</taxon>
        <taxon>Muridae</taxon>
        <taxon>Murinae</taxon>
        <taxon>Rattus</taxon>
    </lineage>
</organism>
<proteinExistence type="evidence at transcript level"/>
<name>RL24_RAT</name>
<accession>P83732</accession>
<accession>P38663</accession>
<evidence type="ECO:0000250" key="1">
    <source>
        <dbReference type="UniProtKB" id="P83731"/>
    </source>
</evidence>
<evidence type="ECO:0000250" key="2">
    <source>
        <dbReference type="UniProtKB" id="Q8BP67"/>
    </source>
</evidence>
<evidence type="ECO:0000256" key="3">
    <source>
        <dbReference type="SAM" id="MobiDB-lite"/>
    </source>
</evidence>
<evidence type="ECO:0000305" key="4"/>